<accession>C7GQI8</accession>
<feature type="chain" id="PRO_0000393311" description="DNA repair and recombination protein RDH54">
    <location>
        <begin position="1"/>
        <end position="924"/>
    </location>
</feature>
<feature type="domain" description="Helicase ATP-binding" evidence="3">
    <location>
        <begin position="299"/>
        <end position="487"/>
    </location>
</feature>
<feature type="domain" description="Helicase C-terminal" evidence="4">
    <location>
        <begin position="631"/>
        <end position="790"/>
    </location>
</feature>
<feature type="region of interest" description="Disordered" evidence="5">
    <location>
        <begin position="1"/>
        <end position="21"/>
    </location>
</feature>
<feature type="region of interest" description="Disordered" evidence="5">
    <location>
        <begin position="155"/>
        <end position="183"/>
    </location>
</feature>
<feature type="short sequence motif" description="DEGH box">
    <location>
        <begin position="472"/>
        <end position="475"/>
    </location>
</feature>
<feature type="compositionally biased region" description="Basic and acidic residues" evidence="5">
    <location>
        <begin position="1"/>
        <end position="10"/>
    </location>
</feature>
<feature type="compositionally biased region" description="Low complexity" evidence="5">
    <location>
        <begin position="168"/>
        <end position="178"/>
    </location>
</feature>
<feature type="binding site" evidence="3">
    <location>
        <begin position="346"/>
        <end position="353"/>
    </location>
    <ligand>
        <name>ATP</name>
        <dbReference type="ChEBI" id="CHEBI:30616"/>
    </ligand>
</feature>
<feature type="cross-link" description="Glycyl lysine isopeptide (Lys-Gly) (interchain with G-Cter in ubiquitin)" evidence="2">
    <location>
        <position position="615"/>
    </location>
</feature>
<evidence type="ECO:0000250" key="1"/>
<evidence type="ECO:0000250" key="2">
    <source>
        <dbReference type="UniProtKB" id="P38086"/>
    </source>
</evidence>
<evidence type="ECO:0000255" key="3">
    <source>
        <dbReference type="PROSITE-ProRule" id="PRU00541"/>
    </source>
</evidence>
<evidence type="ECO:0000255" key="4">
    <source>
        <dbReference type="PROSITE-ProRule" id="PRU00542"/>
    </source>
</evidence>
<evidence type="ECO:0000256" key="5">
    <source>
        <dbReference type="SAM" id="MobiDB-lite"/>
    </source>
</evidence>
<evidence type="ECO:0000305" key="6"/>
<name>RDH54_YEAS2</name>
<dbReference type="EC" id="5.99.1.-"/>
<dbReference type="EC" id="3.6.4.12"/>
<dbReference type="EMBL" id="ACFL01000124">
    <property type="protein sequence ID" value="EEU06936.1"/>
    <property type="molecule type" value="Genomic_DNA"/>
</dbReference>
<dbReference type="SMR" id="C7GQI8"/>
<dbReference type="OrthoDB" id="3905at4893"/>
<dbReference type="Proteomes" id="UP000008073">
    <property type="component" value="Unassembled WGS sequence"/>
</dbReference>
<dbReference type="GO" id="GO:0005634">
    <property type="term" value="C:nucleus"/>
    <property type="evidence" value="ECO:0007669"/>
    <property type="project" value="UniProtKB-SubCell"/>
</dbReference>
<dbReference type="GO" id="GO:0005524">
    <property type="term" value="F:ATP binding"/>
    <property type="evidence" value="ECO:0007669"/>
    <property type="project" value="UniProtKB-KW"/>
</dbReference>
<dbReference type="GO" id="GO:0016887">
    <property type="term" value="F:ATP hydrolysis activity"/>
    <property type="evidence" value="ECO:0007669"/>
    <property type="project" value="RHEA"/>
</dbReference>
<dbReference type="GO" id="GO:0003677">
    <property type="term" value="F:DNA binding"/>
    <property type="evidence" value="ECO:0007669"/>
    <property type="project" value="UniProtKB-KW"/>
</dbReference>
<dbReference type="GO" id="GO:0003916">
    <property type="term" value="F:DNA topoisomerase activity"/>
    <property type="evidence" value="ECO:0007669"/>
    <property type="project" value="UniProtKB-KW"/>
</dbReference>
<dbReference type="GO" id="GO:0015616">
    <property type="term" value="F:DNA translocase activity"/>
    <property type="evidence" value="ECO:0007669"/>
    <property type="project" value="TreeGrafter"/>
</dbReference>
<dbReference type="GO" id="GO:0004386">
    <property type="term" value="F:helicase activity"/>
    <property type="evidence" value="ECO:0007669"/>
    <property type="project" value="UniProtKB-KW"/>
</dbReference>
<dbReference type="GO" id="GO:0000724">
    <property type="term" value="P:double-strand break repair via homologous recombination"/>
    <property type="evidence" value="ECO:0007669"/>
    <property type="project" value="TreeGrafter"/>
</dbReference>
<dbReference type="GO" id="GO:0007131">
    <property type="term" value="P:reciprocal meiotic recombination"/>
    <property type="evidence" value="ECO:0007669"/>
    <property type="project" value="TreeGrafter"/>
</dbReference>
<dbReference type="CDD" id="cd18004">
    <property type="entry name" value="DEXHc_RAD54"/>
    <property type="match status" value="1"/>
</dbReference>
<dbReference type="CDD" id="cd18793">
    <property type="entry name" value="SF2_C_SNF"/>
    <property type="match status" value="1"/>
</dbReference>
<dbReference type="FunFam" id="3.40.50.10810:FF:000058">
    <property type="entry name" value="RDH54p DNA-dependent ATPase"/>
    <property type="match status" value="1"/>
</dbReference>
<dbReference type="Gene3D" id="3.40.50.300">
    <property type="entry name" value="P-loop containing nucleotide triphosphate hydrolases"/>
    <property type="match status" value="1"/>
</dbReference>
<dbReference type="Gene3D" id="1.20.120.850">
    <property type="entry name" value="SWI2/SNF2 ATPases, N-terminal domain"/>
    <property type="match status" value="1"/>
</dbReference>
<dbReference type="Gene3D" id="3.40.50.10810">
    <property type="entry name" value="Tandem AAA-ATPase domain"/>
    <property type="match status" value="1"/>
</dbReference>
<dbReference type="InterPro" id="IPR014001">
    <property type="entry name" value="Helicase_ATP-bd"/>
</dbReference>
<dbReference type="InterPro" id="IPR001650">
    <property type="entry name" value="Helicase_C-like"/>
</dbReference>
<dbReference type="InterPro" id="IPR027417">
    <property type="entry name" value="P-loop_NTPase"/>
</dbReference>
<dbReference type="InterPro" id="IPR038718">
    <property type="entry name" value="SNF2-like_sf"/>
</dbReference>
<dbReference type="InterPro" id="IPR049730">
    <property type="entry name" value="SNF2/RAD54-like_C"/>
</dbReference>
<dbReference type="InterPro" id="IPR000330">
    <property type="entry name" value="SNF2_N"/>
</dbReference>
<dbReference type="InterPro" id="IPR050496">
    <property type="entry name" value="SNF2_RAD54_helicase_repair"/>
</dbReference>
<dbReference type="PANTHER" id="PTHR45629:SF7">
    <property type="entry name" value="DNA EXCISION REPAIR PROTEIN ERCC-6-RELATED"/>
    <property type="match status" value="1"/>
</dbReference>
<dbReference type="PANTHER" id="PTHR45629">
    <property type="entry name" value="SNF2/RAD54 FAMILY MEMBER"/>
    <property type="match status" value="1"/>
</dbReference>
<dbReference type="Pfam" id="PF00271">
    <property type="entry name" value="Helicase_C"/>
    <property type="match status" value="1"/>
</dbReference>
<dbReference type="Pfam" id="PF00176">
    <property type="entry name" value="SNF2-rel_dom"/>
    <property type="match status" value="1"/>
</dbReference>
<dbReference type="SMART" id="SM00487">
    <property type="entry name" value="DEXDc"/>
    <property type="match status" value="1"/>
</dbReference>
<dbReference type="SMART" id="SM00490">
    <property type="entry name" value="HELICc"/>
    <property type="match status" value="1"/>
</dbReference>
<dbReference type="SUPFAM" id="SSF52540">
    <property type="entry name" value="P-loop containing nucleoside triphosphate hydrolases"/>
    <property type="match status" value="2"/>
</dbReference>
<dbReference type="PROSITE" id="PS51192">
    <property type="entry name" value="HELICASE_ATP_BIND_1"/>
    <property type="match status" value="1"/>
</dbReference>
<dbReference type="PROSITE" id="PS51194">
    <property type="entry name" value="HELICASE_CTER"/>
    <property type="match status" value="1"/>
</dbReference>
<organism>
    <name type="scientific">Saccharomyces cerevisiae (strain JAY291)</name>
    <name type="common">Baker's yeast</name>
    <dbReference type="NCBI Taxonomy" id="574961"/>
    <lineage>
        <taxon>Eukaryota</taxon>
        <taxon>Fungi</taxon>
        <taxon>Dikarya</taxon>
        <taxon>Ascomycota</taxon>
        <taxon>Saccharomycotina</taxon>
        <taxon>Saccharomycetes</taxon>
        <taxon>Saccharomycetales</taxon>
        <taxon>Saccharomycetaceae</taxon>
        <taxon>Saccharomyces</taxon>
    </lineage>
</organism>
<protein>
    <recommendedName>
        <fullName>DNA repair and recombination protein RDH54</fullName>
    </recommendedName>
    <alternativeName>
        <fullName>RAD homolog 54</fullName>
    </alternativeName>
    <alternativeName>
        <fullName>Recombination factor TID1</fullName>
    </alternativeName>
    <alternativeName>
        <fullName>Two hybrid interaction with DMC1 protein 1</fullName>
    </alternativeName>
    <domain>
        <recommendedName>
            <fullName>DNA topoisomerase</fullName>
            <ecNumber>5.99.1.-</ecNumber>
        </recommendedName>
    </domain>
    <domain>
        <recommendedName>
            <fullName>Putative helicase</fullName>
            <ecNumber>3.6.4.12</ecNumber>
        </recommendedName>
    </domain>
</protein>
<keyword id="KW-0067">ATP-binding</keyword>
<keyword id="KW-0227">DNA damage</keyword>
<keyword id="KW-0233">DNA recombination</keyword>
<keyword id="KW-0234">DNA repair</keyword>
<keyword id="KW-0238">DNA-binding</keyword>
<keyword id="KW-0347">Helicase</keyword>
<keyword id="KW-0378">Hydrolase</keyword>
<keyword id="KW-0413">Isomerase</keyword>
<keyword id="KW-1017">Isopeptide bond</keyword>
<keyword id="KW-0469">Meiosis</keyword>
<keyword id="KW-0547">Nucleotide-binding</keyword>
<keyword id="KW-0539">Nucleus</keyword>
<keyword id="KW-0799">Topoisomerase</keyword>
<keyword id="KW-0832">Ubl conjugation</keyword>
<gene>
    <name type="primary">RDH54</name>
    <name type="synonym">TID1</name>
    <name type="ORF">C1Q_02585</name>
</gene>
<reference key="1">
    <citation type="journal article" date="2009" name="Genome Res.">
        <title>Genome structure of a Saccharomyces cerevisiae strain widely used in bioethanol production.</title>
        <authorList>
            <person name="Argueso J.L."/>
            <person name="Carazzolle M.F."/>
            <person name="Mieczkowski P.A."/>
            <person name="Duarte F.M."/>
            <person name="Netto O.V.C."/>
            <person name="Missawa S.K."/>
            <person name="Galzerani F."/>
            <person name="Costa G.G.L."/>
            <person name="Vidal R.O."/>
            <person name="Noronha M.F."/>
            <person name="Dominska M."/>
            <person name="Andrietta M.G.S."/>
            <person name="Andrietta S.R."/>
            <person name="Cunha A.F."/>
            <person name="Gomes L.H."/>
            <person name="Tavares F.C.A."/>
            <person name="Alcarde A.R."/>
            <person name="Dietrich F.S."/>
            <person name="McCusker J.H."/>
            <person name="Petes T.D."/>
            <person name="Pereira G.A.G."/>
        </authorList>
    </citation>
    <scope>NUCLEOTIDE SEQUENCE [LARGE SCALE GENOMIC DNA]</scope>
    <source>
        <strain>JAY291</strain>
    </source>
</reference>
<proteinExistence type="inferred from homology"/>
<comment type="function">
    <text evidence="1">Involved in the recombinational repair of double-strand breaks (DSB) in DNA during mitosis and meiosis. Has DNA dependent ATPase activity. Promotes D-loop (displacement loop) formation with RAD51 recombinase. Modifies the topology of double-stranded DNA during the D-loop reaction to facilitate the invasion of the homologous duplex molecule by the initiating single-stranded DNA substrate. Required for adaptation from G2/M checkpoint arrest induced by a double strand break, by participating in monitoring the extent of single-stranded DNA produced by resection of DNA ends. This role is distinct from its roles in recombination. Promotes colocalization of RAD51 and DMC1 during meiotic recombination. Involved in crossover interference (By similarity).</text>
</comment>
<comment type="catalytic activity">
    <reaction>
        <text>ATP + H2O = ADP + phosphate + H(+)</text>
        <dbReference type="Rhea" id="RHEA:13065"/>
        <dbReference type="ChEBI" id="CHEBI:15377"/>
        <dbReference type="ChEBI" id="CHEBI:15378"/>
        <dbReference type="ChEBI" id="CHEBI:30616"/>
        <dbReference type="ChEBI" id="CHEBI:43474"/>
        <dbReference type="ChEBI" id="CHEBI:456216"/>
        <dbReference type="EC" id="3.6.4.12"/>
    </reaction>
</comment>
<comment type="subunit">
    <text evidence="1">Interacts with RAD51 and DMC1.</text>
</comment>
<comment type="subcellular location">
    <subcellularLocation>
        <location evidence="1">Nucleus</location>
    </subcellularLocation>
</comment>
<comment type="similarity">
    <text evidence="6">Belongs to the SNF2/RAD54 helicase family.</text>
</comment>
<sequence>MQIPKYENKPFKPPRRVGSNKYTQLKPTATAVTTAPISKAKVTANLKRSISAGPTLNLAKKPNNLTSNENTRYFTIMYRKPTTKKHKTWSGDGYATLKANSDKLCFYNEAGKFLGSSMLPSDSDSLFETLFKAGSNEVQLDYELKENAEIRSAKEALSQNMGNPSPPTTSTTETVPSTKNDGGKYQMPLSQLFSLNTVKRFKSVTKQTNEHMTTVPKTSQNSKAKKYYPVFDVNKIDNPIVMNKNAAAEVDVIVDPLLGKFLRPHQREGVKFMYDCLMGLARPTIENPDIDCTTKSLVLENDSDISGCLLADDMGLGKTLMSITLIWTLIRQTPFASKVSCSQSGIPLTGLCKKILVVCPVTLIGNWKREFGKWLNLSRIGVLTLSSRNSPDMDKMAVRNFLKVQRTYQVLIIGYEKLLSVSEELEKNKHLIDMLVCDEGHRLKNGASKILNTLKSLDIRRKLLLTGTPIQNDLNEFFTIIDFINPGILGSFASFKRRFIIPITRARDTANRYNEELLKKGEERSKEMIEITKRFILRRTNAILEKYLPPKTDIILFCKPYSQQILAFKDILQGARLDFGQLTFSSSLGLITLLKKVCNSPGLVGSDPYYKSHIKDTQSQDSYSRSLNSGKLKVLMTLLEGIRKGTKEKVVVVSNYTQTLDIIENLMNMAGMSHCRLDGSIPAKQRDSIVTSFNRNPAIFGFLLSAKSGGVGLNLVGASRLILFDNDWNPSVDLQAMSRIHRDGQKKPCFIYRLVTTGCIDEKILQRQLMKNSLSQKFLGDSEMRNKESSNDDLFNKEDLKDLFSVHTDTKSNTHDLICSCDGLGEEIEYPETNQQQNTVELRKRSTTTWTSALDLQKKMNEAATNDDAKKSQYIRQCLVHYKHIDPARQDELFDEVITDSFTELKDSITFAFVKPGEICLREQ</sequence>